<comment type="function">
    <text evidence="1">Catalyzes the complicated ring closure reaction between the two acyclic compounds 1-deoxy-D-xylulose-5-phosphate (DXP) and 3-amino-2-oxopropyl phosphate (1-amino-acetone-3-phosphate or AAP) to form pyridoxine 5'-phosphate (PNP) and inorganic phosphate.</text>
</comment>
<comment type="catalytic activity">
    <reaction evidence="1">
        <text>3-amino-2-oxopropyl phosphate + 1-deoxy-D-xylulose 5-phosphate = pyridoxine 5'-phosphate + phosphate + 2 H2O + H(+)</text>
        <dbReference type="Rhea" id="RHEA:15265"/>
        <dbReference type="ChEBI" id="CHEBI:15377"/>
        <dbReference type="ChEBI" id="CHEBI:15378"/>
        <dbReference type="ChEBI" id="CHEBI:43474"/>
        <dbReference type="ChEBI" id="CHEBI:57279"/>
        <dbReference type="ChEBI" id="CHEBI:57792"/>
        <dbReference type="ChEBI" id="CHEBI:58589"/>
        <dbReference type="EC" id="2.6.99.2"/>
    </reaction>
</comment>
<comment type="pathway">
    <text evidence="1">Cofactor biosynthesis; pyridoxine 5'-phosphate biosynthesis; pyridoxine 5'-phosphate from D-erythrose 4-phosphate: step 5/5.</text>
</comment>
<comment type="subunit">
    <text evidence="1">Homooctamer; tetramer of dimers.</text>
</comment>
<comment type="subcellular location">
    <subcellularLocation>
        <location evidence="1">Cytoplasm</location>
    </subcellularLocation>
</comment>
<comment type="similarity">
    <text evidence="1">Belongs to the PNP synthase family.</text>
</comment>
<accession>Q5HTM5</accession>
<reference key="1">
    <citation type="journal article" date="2005" name="PLoS Biol.">
        <title>Major structural differences and novel potential virulence mechanisms from the genomes of multiple Campylobacter species.</title>
        <authorList>
            <person name="Fouts D.E."/>
            <person name="Mongodin E.F."/>
            <person name="Mandrell R.E."/>
            <person name="Miller W.G."/>
            <person name="Rasko D.A."/>
            <person name="Ravel J."/>
            <person name="Brinkac L.M."/>
            <person name="DeBoy R.T."/>
            <person name="Parker C.T."/>
            <person name="Daugherty S.C."/>
            <person name="Dodson R.J."/>
            <person name="Durkin A.S."/>
            <person name="Madupu R."/>
            <person name="Sullivan S.A."/>
            <person name="Shetty J.U."/>
            <person name="Ayodeji M.A."/>
            <person name="Shvartsbeyn A."/>
            <person name="Schatz M.C."/>
            <person name="Badger J.H."/>
            <person name="Fraser C.M."/>
            <person name="Nelson K.E."/>
        </authorList>
    </citation>
    <scope>NUCLEOTIDE SEQUENCE [LARGE SCALE GENOMIC DNA]</scope>
    <source>
        <strain>RM1221</strain>
    </source>
</reference>
<sequence>MLLGVNIDHIAVLRQARMVNDPDLLEAAFIVARHGDQITLHVREDRRHAQDFDLENIIKFCKSPVNLECALNDEILNLALKLKPHRVTLVPEKREELTTEGGLCLNHAKLKQSIEKLHNANIEVSLFINPSLEDIEKSKILKAQFIELHTGHYANLHNALFSNISHTAFALKELNQDKKTLQAQFEKELQNLELCAKKGLELGLKVAAGHGLNYKNVKPVVKIKEICELNIGQSIVARSVFTGLQNAILEMKELIKR</sequence>
<evidence type="ECO:0000255" key="1">
    <source>
        <dbReference type="HAMAP-Rule" id="MF_00279"/>
    </source>
</evidence>
<name>PDXJ_CAMJR</name>
<dbReference type="EC" id="2.6.99.2" evidence="1"/>
<dbReference type="EMBL" id="CP000025">
    <property type="protein sequence ID" value="AAW35693.1"/>
    <property type="molecule type" value="Genomic_DNA"/>
</dbReference>
<dbReference type="RefSeq" id="WP_002859302.1">
    <property type="nucleotide sequence ID" value="NC_003912.7"/>
</dbReference>
<dbReference type="SMR" id="Q5HTM5"/>
<dbReference type="KEGG" id="cjr:CJE1373"/>
<dbReference type="HOGENOM" id="CLU_074563_0_0_7"/>
<dbReference type="UniPathway" id="UPA00244">
    <property type="reaction ID" value="UER00313"/>
</dbReference>
<dbReference type="GO" id="GO:0005829">
    <property type="term" value="C:cytosol"/>
    <property type="evidence" value="ECO:0007669"/>
    <property type="project" value="TreeGrafter"/>
</dbReference>
<dbReference type="GO" id="GO:0033856">
    <property type="term" value="F:pyridoxine 5'-phosphate synthase activity"/>
    <property type="evidence" value="ECO:0007669"/>
    <property type="project" value="UniProtKB-EC"/>
</dbReference>
<dbReference type="GO" id="GO:0008615">
    <property type="term" value="P:pyridoxine biosynthetic process"/>
    <property type="evidence" value="ECO:0007669"/>
    <property type="project" value="UniProtKB-UniRule"/>
</dbReference>
<dbReference type="CDD" id="cd00003">
    <property type="entry name" value="PNPsynthase"/>
    <property type="match status" value="1"/>
</dbReference>
<dbReference type="Gene3D" id="3.20.20.70">
    <property type="entry name" value="Aldolase class I"/>
    <property type="match status" value="1"/>
</dbReference>
<dbReference type="HAMAP" id="MF_00279">
    <property type="entry name" value="PdxJ"/>
    <property type="match status" value="1"/>
</dbReference>
<dbReference type="InterPro" id="IPR013785">
    <property type="entry name" value="Aldolase_TIM"/>
</dbReference>
<dbReference type="InterPro" id="IPR004569">
    <property type="entry name" value="PyrdxlP_synth_PdxJ"/>
</dbReference>
<dbReference type="InterPro" id="IPR036130">
    <property type="entry name" value="Pyridoxine-5'_phos_synth"/>
</dbReference>
<dbReference type="NCBIfam" id="TIGR00559">
    <property type="entry name" value="pdxJ"/>
    <property type="match status" value="1"/>
</dbReference>
<dbReference type="NCBIfam" id="NF003625">
    <property type="entry name" value="PRK05265.1-3"/>
    <property type="match status" value="1"/>
</dbReference>
<dbReference type="NCBIfam" id="NF003627">
    <property type="entry name" value="PRK05265.1-5"/>
    <property type="match status" value="1"/>
</dbReference>
<dbReference type="PANTHER" id="PTHR30456">
    <property type="entry name" value="PYRIDOXINE 5'-PHOSPHATE SYNTHASE"/>
    <property type="match status" value="1"/>
</dbReference>
<dbReference type="PANTHER" id="PTHR30456:SF0">
    <property type="entry name" value="PYRIDOXINE 5'-PHOSPHATE SYNTHASE"/>
    <property type="match status" value="1"/>
</dbReference>
<dbReference type="Pfam" id="PF03740">
    <property type="entry name" value="PdxJ"/>
    <property type="match status" value="1"/>
</dbReference>
<dbReference type="SUPFAM" id="SSF63892">
    <property type="entry name" value="Pyridoxine 5'-phosphate synthase"/>
    <property type="match status" value="1"/>
</dbReference>
<keyword id="KW-0963">Cytoplasm</keyword>
<keyword id="KW-0664">Pyridoxine biosynthesis</keyword>
<keyword id="KW-0808">Transferase</keyword>
<gene>
    <name evidence="1" type="primary">pdxJ</name>
    <name type="ordered locus">CJE1373</name>
</gene>
<proteinExistence type="inferred from homology"/>
<organism>
    <name type="scientific">Campylobacter jejuni (strain RM1221)</name>
    <dbReference type="NCBI Taxonomy" id="195099"/>
    <lineage>
        <taxon>Bacteria</taxon>
        <taxon>Pseudomonadati</taxon>
        <taxon>Campylobacterota</taxon>
        <taxon>Epsilonproteobacteria</taxon>
        <taxon>Campylobacterales</taxon>
        <taxon>Campylobacteraceae</taxon>
        <taxon>Campylobacter</taxon>
    </lineage>
</organism>
<protein>
    <recommendedName>
        <fullName evidence="1">Pyridoxine 5'-phosphate synthase</fullName>
        <shortName evidence="1">PNP synthase</shortName>
        <ecNumber evidence="1">2.6.99.2</ecNumber>
    </recommendedName>
</protein>
<feature type="chain" id="PRO_0000231796" description="Pyridoxine 5'-phosphate synthase">
    <location>
        <begin position="1"/>
        <end position="257"/>
    </location>
</feature>
<feature type="active site" description="Proton acceptor" evidence="1">
    <location>
        <position position="41"/>
    </location>
</feature>
<feature type="active site" description="Proton acceptor" evidence="1">
    <location>
        <position position="68"/>
    </location>
</feature>
<feature type="active site" description="Proton donor" evidence="1">
    <location>
        <position position="210"/>
    </location>
</feature>
<feature type="binding site" evidence="1">
    <location>
        <position position="6"/>
    </location>
    <ligand>
        <name>3-amino-2-oxopropyl phosphate</name>
        <dbReference type="ChEBI" id="CHEBI:57279"/>
    </ligand>
</feature>
<feature type="binding site" evidence="1">
    <location>
        <begin position="8"/>
        <end position="9"/>
    </location>
    <ligand>
        <name>1-deoxy-D-xylulose 5-phosphate</name>
        <dbReference type="ChEBI" id="CHEBI:57792"/>
    </ligand>
</feature>
<feature type="binding site" evidence="1">
    <location>
        <position position="17"/>
    </location>
    <ligand>
        <name>3-amino-2-oxopropyl phosphate</name>
        <dbReference type="ChEBI" id="CHEBI:57279"/>
    </ligand>
</feature>
<feature type="binding site" evidence="1">
    <location>
        <position position="43"/>
    </location>
    <ligand>
        <name>1-deoxy-D-xylulose 5-phosphate</name>
        <dbReference type="ChEBI" id="CHEBI:57792"/>
    </ligand>
</feature>
<feature type="binding site" evidence="1">
    <location>
        <position position="48"/>
    </location>
    <ligand>
        <name>1-deoxy-D-xylulose 5-phosphate</name>
        <dbReference type="ChEBI" id="CHEBI:57792"/>
    </ligand>
</feature>
<feature type="binding site" evidence="1">
    <location>
        <position position="98"/>
    </location>
    <ligand>
        <name>1-deoxy-D-xylulose 5-phosphate</name>
        <dbReference type="ChEBI" id="CHEBI:57792"/>
    </ligand>
</feature>
<feature type="binding site" evidence="1">
    <location>
        <position position="211"/>
    </location>
    <ligand>
        <name>3-amino-2-oxopropyl phosphate</name>
        <dbReference type="ChEBI" id="CHEBI:57279"/>
    </ligand>
</feature>
<feature type="binding site" evidence="1">
    <location>
        <begin position="232"/>
        <end position="233"/>
    </location>
    <ligand>
        <name>3-amino-2-oxopropyl phosphate</name>
        <dbReference type="ChEBI" id="CHEBI:57279"/>
    </ligand>
</feature>
<feature type="site" description="Transition state stabilizer" evidence="1">
    <location>
        <position position="147"/>
    </location>
</feature>